<name>RL27_HYDS0</name>
<dbReference type="EMBL" id="CP001130">
    <property type="protein sequence ID" value="ACG56802.1"/>
    <property type="molecule type" value="Genomic_DNA"/>
</dbReference>
<dbReference type="RefSeq" id="WP_012513159.1">
    <property type="nucleotide sequence ID" value="NC_011126.1"/>
</dbReference>
<dbReference type="SMR" id="B4U6N4"/>
<dbReference type="STRING" id="380749.HY04AAS1_0110"/>
<dbReference type="KEGG" id="hya:HY04AAS1_0110"/>
<dbReference type="eggNOG" id="COG0211">
    <property type="taxonomic scope" value="Bacteria"/>
</dbReference>
<dbReference type="HOGENOM" id="CLU_095424_4_1_0"/>
<dbReference type="OrthoDB" id="9803474at2"/>
<dbReference type="GO" id="GO:0022625">
    <property type="term" value="C:cytosolic large ribosomal subunit"/>
    <property type="evidence" value="ECO:0007669"/>
    <property type="project" value="TreeGrafter"/>
</dbReference>
<dbReference type="GO" id="GO:0003735">
    <property type="term" value="F:structural constituent of ribosome"/>
    <property type="evidence" value="ECO:0007669"/>
    <property type="project" value="InterPro"/>
</dbReference>
<dbReference type="GO" id="GO:0006412">
    <property type="term" value="P:translation"/>
    <property type="evidence" value="ECO:0007669"/>
    <property type="project" value="UniProtKB-UniRule"/>
</dbReference>
<dbReference type="FunFam" id="2.40.50.100:FF:000020">
    <property type="entry name" value="50S ribosomal protein L27"/>
    <property type="match status" value="1"/>
</dbReference>
<dbReference type="Gene3D" id="2.40.50.100">
    <property type="match status" value="1"/>
</dbReference>
<dbReference type="HAMAP" id="MF_00539">
    <property type="entry name" value="Ribosomal_bL27"/>
    <property type="match status" value="1"/>
</dbReference>
<dbReference type="InterPro" id="IPR001684">
    <property type="entry name" value="Ribosomal_bL27"/>
</dbReference>
<dbReference type="InterPro" id="IPR018261">
    <property type="entry name" value="Ribosomal_bL27_CS"/>
</dbReference>
<dbReference type="NCBIfam" id="TIGR00062">
    <property type="entry name" value="L27"/>
    <property type="match status" value="1"/>
</dbReference>
<dbReference type="PANTHER" id="PTHR15893:SF0">
    <property type="entry name" value="LARGE RIBOSOMAL SUBUNIT PROTEIN BL27M"/>
    <property type="match status" value="1"/>
</dbReference>
<dbReference type="PANTHER" id="PTHR15893">
    <property type="entry name" value="RIBOSOMAL PROTEIN L27"/>
    <property type="match status" value="1"/>
</dbReference>
<dbReference type="Pfam" id="PF01016">
    <property type="entry name" value="Ribosomal_L27"/>
    <property type="match status" value="1"/>
</dbReference>
<dbReference type="PRINTS" id="PR00063">
    <property type="entry name" value="RIBOSOMALL27"/>
</dbReference>
<dbReference type="SUPFAM" id="SSF110324">
    <property type="entry name" value="Ribosomal L27 protein-like"/>
    <property type="match status" value="1"/>
</dbReference>
<dbReference type="PROSITE" id="PS00831">
    <property type="entry name" value="RIBOSOMAL_L27"/>
    <property type="match status" value="1"/>
</dbReference>
<gene>
    <name evidence="1" type="primary">rpmA</name>
    <name type="ordered locus">HY04AAS1_0110</name>
</gene>
<organism>
    <name type="scientific">Hydrogenobaculum sp. (strain Y04AAS1)</name>
    <dbReference type="NCBI Taxonomy" id="380749"/>
    <lineage>
        <taxon>Bacteria</taxon>
        <taxon>Pseudomonadati</taxon>
        <taxon>Aquificota</taxon>
        <taxon>Aquificia</taxon>
        <taxon>Aquificales</taxon>
        <taxon>Aquificaceae</taxon>
        <taxon>Hydrogenobaculum</taxon>
    </lineage>
</organism>
<reference key="1">
    <citation type="journal article" date="2009" name="J. Bacteriol.">
        <title>Complete and draft genome sequences of six members of the Aquificales.</title>
        <authorList>
            <person name="Reysenbach A.-L."/>
            <person name="Hamamura N."/>
            <person name="Podar M."/>
            <person name="Griffiths E."/>
            <person name="Ferreira S."/>
            <person name="Hochstein R."/>
            <person name="Heidelberg J."/>
            <person name="Johnson J."/>
            <person name="Mead D."/>
            <person name="Pohorille A."/>
            <person name="Sarmiento M."/>
            <person name="Schweighofer K."/>
            <person name="Seshadri R."/>
            <person name="Voytek M.A."/>
        </authorList>
    </citation>
    <scope>NUCLEOTIDE SEQUENCE [LARGE SCALE GENOMIC DNA]</scope>
    <source>
        <strain>Y04AAS1</strain>
    </source>
</reference>
<comment type="similarity">
    <text evidence="1">Belongs to the bacterial ribosomal protein bL27 family.</text>
</comment>
<feature type="chain" id="PRO_1000128761" description="Large ribosomal subunit protein bL27">
    <location>
        <begin position="1"/>
        <end position="87"/>
    </location>
</feature>
<feature type="region of interest" description="Disordered" evidence="2">
    <location>
        <begin position="1"/>
        <end position="21"/>
    </location>
</feature>
<feature type="compositionally biased region" description="Polar residues" evidence="2">
    <location>
        <begin position="1"/>
        <end position="11"/>
    </location>
</feature>
<sequence length="87" mass="9184">MASKASGGSTRNGRDSNSKRLGVKAFGGQFVKAGSIIIRQRGTKVHPGKNVGLGSDYTIFALKDGIVKFEEKGKKNFVSIEPVEASA</sequence>
<keyword id="KW-0687">Ribonucleoprotein</keyword>
<keyword id="KW-0689">Ribosomal protein</keyword>
<evidence type="ECO:0000255" key="1">
    <source>
        <dbReference type="HAMAP-Rule" id="MF_00539"/>
    </source>
</evidence>
<evidence type="ECO:0000256" key="2">
    <source>
        <dbReference type="SAM" id="MobiDB-lite"/>
    </source>
</evidence>
<evidence type="ECO:0000305" key="3"/>
<accession>B4U6N4</accession>
<protein>
    <recommendedName>
        <fullName evidence="1">Large ribosomal subunit protein bL27</fullName>
    </recommendedName>
    <alternativeName>
        <fullName evidence="3">50S ribosomal protein L27</fullName>
    </alternativeName>
</protein>
<proteinExistence type="inferred from homology"/>